<dbReference type="EMBL" id="CU468135">
    <property type="protein sequence ID" value="CAO97528.1"/>
    <property type="molecule type" value="Genomic_DNA"/>
</dbReference>
<dbReference type="RefSeq" id="WP_012442194.1">
    <property type="nucleotide sequence ID" value="NC_010694.1"/>
</dbReference>
<dbReference type="SMR" id="B2VHV7"/>
<dbReference type="STRING" id="465817.ETA_24820"/>
<dbReference type="KEGG" id="eta:ETA_24820"/>
<dbReference type="eggNOG" id="COG0254">
    <property type="taxonomic scope" value="Bacteria"/>
</dbReference>
<dbReference type="HOGENOM" id="CLU_114306_2_1_6"/>
<dbReference type="OrthoDB" id="9803251at2"/>
<dbReference type="Proteomes" id="UP000001726">
    <property type="component" value="Chromosome"/>
</dbReference>
<dbReference type="GO" id="GO:1990904">
    <property type="term" value="C:ribonucleoprotein complex"/>
    <property type="evidence" value="ECO:0007669"/>
    <property type="project" value="UniProtKB-KW"/>
</dbReference>
<dbReference type="GO" id="GO:0005840">
    <property type="term" value="C:ribosome"/>
    <property type="evidence" value="ECO:0007669"/>
    <property type="project" value="UniProtKB-KW"/>
</dbReference>
<dbReference type="GO" id="GO:0003735">
    <property type="term" value="F:structural constituent of ribosome"/>
    <property type="evidence" value="ECO:0007669"/>
    <property type="project" value="InterPro"/>
</dbReference>
<dbReference type="GO" id="GO:0006412">
    <property type="term" value="P:translation"/>
    <property type="evidence" value="ECO:0007669"/>
    <property type="project" value="UniProtKB-UniRule"/>
</dbReference>
<dbReference type="Gene3D" id="4.10.830.30">
    <property type="entry name" value="Ribosomal protein L31"/>
    <property type="match status" value="1"/>
</dbReference>
<dbReference type="HAMAP" id="MF_00502">
    <property type="entry name" value="Ribosomal_bL31_2"/>
    <property type="match status" value="1"/>
</dbReference>
<dbReference type="InterPro" id="IPR034704">
    <property type="entry name" value="Ribosomal_bL28/bL31-like_sf"/>
</dbReference>
<dbReference type="InterPro" id="IPR002150">
    <property type="entry name" value="Ribosomal_bL31"/>
</dbReference>
<dbReference type="InterPro" id="IPR027493">
    <property type="entry name" value="Ribosomal_bL31_B"/>
</dbReference>
<dbReference type="InterPro" id="IPR042105">
    <property type="entry name" value="Ribosomal_bL31_sf"/>
</dbReference>
<dbReference type="NCBIfam" id="TIGR00105">
    <property type="entry name" value="L31"/>
    <property type="match status" value="1"/>
</dbReference>
<dbReference type="NCBIfam" id="NF002462">
    <property type="entry name" value="PRK01678.1"/>
    <property type="match status" value="1"/>
</dbReference>
<dbReference type="PANTHER" id="PTHR33280">
    <property type="entry name" value="50S RIBOSOMAL PROTEIN L31, CHLOROPLASTIC"/>
    <property type="match status" value="1"/>
</dbReference>
<dbReference type="PANTHER" id="PTHR33280:SF1">
    <property type="entry name" value="LARGE RIBOSOMAL SUBUNIT PROTEIN BL31C"/>
    <property type="match status" value="1"/>
</dbReference>
<dbReference type="Pfam" id="PF01197">
    <property type="entry name" value="Ribosomal_L31"/>
    <property type="match status" value="1"/>
</dbReference>
<dbReference type="PRINTS" id="PR01249">
    <property type="entry name" value="RIBOSOMALL31"/>
</dbReference>
<dbReference type="SUPFAM" id="SSF143800">
    <property type="entry name" value="L28p-like"/>
    <property type="match status" value="1"/>
</dbReference>
<gene>
    <name evidence="1" type="primary">rpmE2</name>
    <name type="ordered locus">ETA_24820</name>
</gene>
<name>RL31B_ERWT9</name>
<accession>B2VHV7</accession>
<reference key="1">
    <citation type="journal article" date="2008" name="Environ. Microbiol.">
        <title>The genome of Erwinia tasmaniensis strain Et1/99, a non-pathogenic bacterium in the genus Erwinia.</title>
        <authorList>
            <person name="Kube M."/>
            <person name="Migdoll A.M."/>
            <person name="Mueller I."/>
            <person name="Kuhl H."/>
            <person name="Beck A."/>
            <person name="Reinhardt R."/>
            <person name="Geider K."/>
        </authorList>
    </citation>
    <scope>NUCLEOTIDE SEQUENCE [LARGE SCALE GENOMIC DNA]</scope>
    <source>
        <strain>DSM 17950 / CFBP 7177 / CIP 109463 / NCPPB 4357 / Et1/99</strain>
    </source>
</reference>
<keyword id="KW-1185">Reference proteome</keyword>
<keyword id="KW-0687">Ribonucleoprotein</keyword>
<keyword id="KW-0689">Ribosomal protein</keyword>
<comment type="subunit">
    <text evidence="1">Part of the 50S ribosomal subunit.</text>
</comment>
<comment type="similarity">
    <text evidence="1">Belongs to the bacterial ribosomal protein bL31 family. Type B subfamily.</text>
</comment>
<evidence type="ECO:0000255" key="1">
    <source>
        <dbReference type="HAMAP-Rule" id="MF_00502"/>
    </source>
</evidence>
<evidence type="ECO:0000305" key="2"/>
<feature type="chain" id="PRO_1000126809" description="Large ribosomal subunit protein bL31B">
    <location>
        <begin position="1"/>
        <end position="86"/>
    </location>
</feature>
<organism>
    <name type="scientific">Erwinia tasmaniensis (strain DSM 17950 / CFBP 7177 / CIP 109463 / NCPPB 4357 / Et1/99)</name>
    <dbReference type="NCBI Taxonomy" id="465817"/>
    <lineage>
        <taxon>Bacteria</taxon>
        <taxon>Pseudomonadati</taxon>
        <taxon>Pseudomonadota</taxon>
        <taxon>Gammaproteobacteria</taxon>
        <taxon>Enterobacterales</taxon>
        <taxon>Erwiniaceae</taxon>
        <taxon>Erwinia</taxon>
    </lineage>
</organism>
<protein>
    <recommendedName>
        <fullName evidence="1">Large ribosomal subunit protein bL31B</fullName>
    </recommendedName>
    <alternativeName>
        <fullName evidence="2">50S ribosomal protein L31 type B</fullName>
    </alternativeName>
</protein>
<sequence>MKSDIHPAYRQVAFHDTTADAYFIVGSTIKTDRTVQYEGKELPYVPLDVSSASHVYYTGKQKDFAKEGSAARFNQRFGSFLGAMKK</sequence>
<proteinExistence type="inferred from homology"/>